<feature type="chain" id="PRO_0000424217" description="6-hydroxypseudooxynicotine dehydrogenase complex subunit gamma">
    <location>
        <begin position="1"/>
        <end position="794"/>
    </location>
</feature>
<feature type="helix" evidence="4">
    <location>
        <begin position="35"/>
        <end position="40"/>
    </location>
</feature>
<feature type="helix" evidence="4">
    <location>
        <begin position="46"/>
        <end position="48"/>
    </location>
</feature>
<feature type="strand" evidence="4">
    <location>
        <begin position="55"/>
        <end position="61"/>
    </location>
</feature>
<feature type="strand" evidence="4">
    <location>
        <begin position="65"/>
        <end position="69"/>
    </location>
</feature>
<feature type="helix" evidence="4">
    <location>
        <begin position="76"/>
        <end position="79"/>
    </location>
</feature>
<feature type="strand" evidence="4">
    <location>
        <begin position="83"/>
        <end position="87"/>
    </location>
</feature>
<feature type="helix" evidence="4">
    <location>
        <begin position="89"/>
        <end position="92"/>
    </location>
</feature>
<feature type="strand" evidence="4">
    <location>
        <begin position="94"/>
        <end position="96"/>
    </location>
</feature>
<feature type="strand" evidence="4">
    <location>
        <begin position="103"/>
        <end position="105"/>
    </location>
</feature>
<feature type="strand" evidence="4">
    <location>
        <begin position="115"/>
        <end position="117"/>
    </location>
</feature>
<feature type="strand" evidence="4">
    <location>
        <begin position="122"/>
        <end position="125"/>
    </location>
</feature>
<feature type="strand" evidence="4">
    <location>
        <begin position="131"/>
        <end position="139"/>
    </location>
</feature>
<feature type="helix" evidence="4">
    <location>
        <begin position="140"/>
        <end position="148"/>
    </location>
</feature>
<feature type="strand" evidence="4">
    <location>
        <begin position="154"/>
        <end position="156"/>
    </location>
</feature>
<feature type="helix" evidence="4">
    <location>
        <begin position="163"/>
        <end position="167"/>
    </location>
</feature>
<feature type="strand" evidence="4">
    <location>
        <begin position="168"/>
        <end position="170"/>
    </location>
</feature>
<feature type="strand" evidence="4">
    <location>
        <begin position="182"/>
        <end position="185"/>
    </location>
</feature>
<feature type="helix" evidence="4">
    <location>
        <begin position="191"/>
        <end position="196"/>
    </location>
</feature>
<feature type="strand" evidence="4">
    <location>
        <begin position="199"/>
        <end position="207"/>
    </location>
</feature>
<feature type="strand" evidence="4">
    <location>
        <begin position="220"/>
        <end position="225"/>
    </location>
</feature>
<feature type="turn" evidence="4">
    <location>
        <begin position="227"/>
        <end position="229"/>
    </location>
</feature>
<feature type="strand" evidence="4">
    <location>
        <begin position="232"/>
        <end position="235"/>
    </location>
</feature>
<feature type="helix" evidence="4">
    <location>
        <begin position="244"/>
        <end position="251"/>
    </location>
</feature>
<feature type="turn" evidence="4">
    <location>
        <begin position="269"/>
        <end position="271"/>
    </location>
</feature>
<feature type="helix" evidence="4">
    <location>
        <begin position="277"/>
        <end position="287"/>
    </location>
</feature>
<feature type="strand" evidence="4">
    <location>
        <begin position="293"/>
        <end position="296"/>
    </location>
</feature>
<feature type="helix" evidence="4">
    <location>
        <begin position="299"/>
        <end position="305"/>
    </location>
</feature>
<feature type="strand" evidence="4">
    <location>
        <begin position="312"/>
        <end position="320"/>
    </location>
</feature>
<feature type="strand" evidence="4">
    <location>
        <begin position="326"/>
        <end position="328"/>
    </location>
</feature>
<feature type="strand" evidence="4">
    <location>
        <begin position="333"/>
        <end position="336"/>
    </location>
</feature>
<feature type="strand" evidence="4">
    <location>
        <begin position="343"/>
        <end position="346"/>
    </location>
</feature>
<feature type="helix" evidence="4">
    <location>
        <begin position="347"/>
        <end position="352"/>
    </location>
</feature>
<feature type="strand" evidence="4">
    <location>
        <begin position="368"/>
        <end position="372"/>
    </location>
</feature>
<feature type="helix" evidence="4">
    <location>
        <begin position="387"/>
        <end position="404"/>
    </location>
</feature>
<feature type="helix" evidence="4">
    <location>
        <begin position="409"/>
        <end position="416"/>
    </location>
</feature>
<feature type="strand" evidence="4">
    <location>
        <begin position="420"/>
        <end position="422"/>
    </location>
</feature>
<feature type="strand" evidence="4">
    <location>
        <begin position="428"/>
        <end position="430"/>
    </location>
</feature>
<feature type="strand" evidence="4">
    <location>
        <begin position="434"/>
        <end position="438"/>
    </location>
</feature>
<feature type="helix" evidence="4">
    <location>
        <begin position="448"/>
        <end position="453"/>
    </location>
</feature>
<feature type="helix" evidence="4">
    <location>
        <begin position="458"/>
        <end position="461"/>
    </location>
</feature>
<feature type="strand" evidence="4">
    <location>
        <begin position="466"/>
        <end position="469"/>
    </location>
</feature>
<feature type="strand" evidence="4">
    <location>
        <begin position="474"/>
        <end position="477"/>
    </location>
</feature>
<feature type="strand" evidence="4">
    <location>
        <begin position="492"/>
        <end position="497"/>
    </location>
</feature>
<feature type="turn" evidence="4">
    <location>
        <begin position="498"/>
        <end position="500"/>
    </location>
</feature>
<feature type="strand" evidence="4">
    <location>
        <begin position="501"/>
        <end position="508"/>
    </location>
</feature>
<feature type="strand" evidence="4">
    <location>
        <begin position="511"/>
        <end position="513"/>
    </location>
</feature>
<feature type="helix" evidence="4">
    <location>
        <begin position="515"/>
        <end position="527"/>
    </location>
</feature>
<feature type="helix" evidence="4">
    <location>
        <begin position="531"/>
        <end position="533"/>
    </location>
</feature>
<feature type="strand" evidence="4">
    <location>
        <begin position="534"/>
        <end position="539"/>
    </location>
</feature>
<feature type="turn" evidence="4">
    <location>
        <begin position="541"/>
        <end position="543"/>
    </location>
</feature>
<feature type="helix" evidence="4">
    <location>
        <begin position="555"/>
        <end position="577"/>
    </location>
</feature>
<feature type="turn" evidence="4">
    <location>
        <begin position="578"/>
        <end position="581"/>
    </location>
</feature>
<feature type="strand" evidence="4">
    <location>
        <begin position="593"/>
        <end position="595"/>
    </location>
</feature>
<feature type="strand" evidence="4">
    <location>
        <begin position="599"/>
        <end position="602"/>
    </location>
</feature>
<feature type="helix" evidence="4">
    <location>
        <begin position="607"/>
        <end position="613"/>
    </location>
</feature>
<feature type="strand" evidence="4">
    <location>
        <begin position="614"/>
        <end position="619"/>
    </location>
</feature>
<feature type="strand" evidence="4">
    <location>
        <begin position="645"/>
        <end position="652"/>
    </location>
</feature>
<feature type="turn" evidence="4">
    <location>
        <begin position="654"/>
        <end position="656"/>
    </location>
</feature>
<feature type="strand" evidence="4">
    <location>
        <begin position="659"/>
        <end position="666"/>
    </location>
</feature>
<feature type="helix" evidence="4">
    <location>
        <begin position="676"/>
        <end position="695"/>
    </location>
</feature>
<feature type="turn" evidence="4">
    <location>
        <begin position="712"/>
        <end position="714"/>
    </location>
</feature>
<feature type="turn" evidence="4">
    <location>
        <begin position="720"/>
        <end position="722"/>
    </location>
</feature>
<feature type="turn" evidence="4">
    <location>
        <begin position="740"/>
        <end position="742"/>
    </location>
</feature>
<feature type="turn" evidence="4">
    <location>
        <begin position="747"/>
        <end position="753"/>
    </location>
</feature>
<feature type="helix" evidence="4">
    <location>
        <begin position="754"/>
        <end position="764"/>
    </location>
</feature>
<feature type="strand" evidence="4">
    <location>
        <begin position="774"/>
        <end position="776"/>
    </location>
</feature>
<feature type="turn" evidence="4">
    <location>
        <begin position="779"/>
        <end position="784"/>
    </location>
</feature>
<feature type="turn" evidence="4">
    <location>
        <begin position="787"/>
        <end position="789"/>
    </location>
</feature>
<reference key="1">
    <citation type="journal article" date="1998" name="J. Mol. Biol.">
        <title>Gene structures and properties of enzymes of the plasmid-encoded nicotine catabolism of Arthrobacter nicotinovorans.</title>
        <authorList>
            <person name="Schenk S."/>
            <person name="Hoelz A."/>
            <person name="Kraus B."/>
            <person name="Decker K."/>
        </authorList>
    </citation>
    <scope>NUCLEOTIDE SEQUENCE [GENOMIC DNA]</scope>
    <scope>PROTEIN SEQUENCE OF 7-15</scope>
    <scope>FUNCTION</scope>
    <scope>SUBUNIT</scope>
</reference>
<reference key="2">
    <citation type="journal article" date="2001" name="J. Bacteriol.">
        <title>Gene cluster on pAO1 of Arthrobacter nicotinovorans involved in degradation of the plant alkaloid nicotine: cloning, purification, and characterization of 2,6-dihydroxypyridine 3-hydroxylase.</title>
        <authorList>
            <person name="Baitsch D."/>
            <person name="Sandu C."/>
            <person name="Brandsch R."/>
            <person name="Igloi G.L."/>
        </authorList>
    </citation>
    <scope>NUCLEOTIDE SEQUENCE [GENOMIC DNA]</scope>
</reference>
<reference key="3">
    <citation type="journal article" date="2003" name="J. Bacteriol.">
        <title>Sequence of the 165-kilobase catabolic plasmid pAO1 from Arthrobacter nicotinovorans and identification of a pAO1-dependent nicotine uptake system.</title>
        <authorList>
            <person name="Igloi G.L."/>
            <person name="Brandsch R."/>
        </authorList>
    </citation>
    <scope>NUCLEOTIDE SEQUENCE [GENOMIC DNA]</scope>
</reference>
<reference key="4">
    <citation type="journal article" date="2006" name="Appl. Environ. Microbiol.">
        <title>A functional mobA gene for molybdopterin cytosine dinucleotide cofactor biosynthesis is required for activity and holoenzyme assembly of the heterotrimeric nicotine dehydrogenases of Arthrobacter nicotinovorans.</title>
        <authorList>
            <person name="Sachelaru P."/>
            <person name="Schiltz E."/>
            <person name="Brandsch R."/>
        </authorList>
    </citation>
    <scope>FUNCTION</scope>
    <scope>COFACTOR</scope>
</reference>
<evidence type="ECO:0000269" key="1">
    <source>
    </source>
</evidence>
<evidence type="ECO:0000269" key="2">
    <source>
    </source>
</evidence>
<evidence type="ECO:0000305" key="3">
    <source>
    </source>
</evidence>
<evidence type="ECO:0007829" key="4">
    <source>
        <dbReference type="PDB" id="7DQX"/>
    </source>
</evidence>
<keyword id="KW-0002">3D-structure</keyword>
<keyword id="KW-0903">Direct protein sequencing</keyword>
<keyword id="KW-0479">Metal-binding</keyword>
<keyword id="KW-0500">Molybdenum</keyword>
<keyword id="KW-0560">Oxidoreductase</keyword>
<keyword id="KW-0614">Plasmid</keyword>
<geneLocation type="plasmid">
    <name>pAO1</name>
</geneLocation>
<comment type="function">
    <text evidence="1 2">Molybdo-flavoprotein enzyme complex involved in nicotine degradation. The subunit gamma (large subunit) contains the substrate-binding sites, the subunit alpha (medium subunit) binds FAD and the subunit beta (small subunit) has a 2Fe-2S ferredoxin-type domain which binds 2 2Fe-2S clusters.</text>
</comment>
<comment type="catalytic activity">
    <reaction>
        <text>6-hydroxypseudooxynicotine + A + H2O = 2,6-dihydroxypseudooxynicotine + AH2</text>
        <dbReference type="Rhea" id="RHEA:34223"/>
        <dbReference type="ChEBI" id="CHEBI:13193"/>
        <dbReference type="ChEBI" id="CHEBI:15377"/>
        <dbReference type="ChEBI" id="CHEBI:17499"/>
        <dbReference type="ChEBI" id="CHEBI:58682"/>
        <dbReference type="ChEBI" id="CHEBI:66944"/>
        <dbReference type="EC" id="1.5.99.14"/>
    </reaction>
</comment>
<comment type="cofactor">
    <cofactor evidence="1">
        <name>Mo-molybdopterin cytosine dinucleotide</name>
        <dbReference type="ChEBI" id="CHEBI:71308"/>
    </cofactor>
    <text evidence="1">Binds 1 Mo-molybdopterin cytosine dinucleotide (Mo-MCD) per subunit.</text>
</comment>
<comment type="pathway">
    <text>Alkaloid degradation; nicotine degradation.</text>
</comment>
<comment type="subunit">
    <text evidence="3">Heterohexamer of 2 alpha (kdhA), 2 beta (kdhB) and 2 gamma (kdhC) subunit. Dimer of heterotrimers (Probable).</text>
</comment>
<organism>
    <name type="scientific">Paenarthrobacter nicotinovorans</name>
    <name type="common">Arthrobacter nicotinovorans</name>
    <dbReference type="NCBI Taxonomy" id="29320"/>
    <lineage>
        <taxon>Bacteria</taxon>
        <taxon>Bacillati</taxon>
        <taxon>Actinomycetota</taxon>
        <taxon>Actinomycetes</taxon>
        <taxon>Micrococcales</taxon>
        <taxon>Micrococcaceae</taxon>
        <taxon>Paenarthrobacter</taxon>
    </lineage>
</organism>
<protein>
    <recommendedName>
        <fullName>6-hydroxypseudooxynicotine dehydrogenase complex subunit gamma</fullName>
        <ecNumber>1.5.99.14</ecNumber>
    </recommendedName>
    <alternativeName>
        <fullName>Ketone dehydrogenase large molybdopterin subunit</fullName>
    </alternativeName>
</protein>
<proteinExistence type="evidence at protein level"/>
<dbReference type="EC" id="1.5.99.14"/>
<dbReference type="EMBL" id="AF373840">
    <property type="protein sequence ID" value="AAK64253.1"/>
    <property type="molecule type" value="Genomic_DNA"/>
</dbReference>
<dbReference type="EMBL" id="AJ306904">
    <property type="protein sequence ID" value="CAC37487.1"/>
    <property type="molecule type" value="Genomic_DNA"/>
</dbReference>
<dbReference type="EMBL" id="AJ507836">
    <property type="protein sequence ID" value="CAD47940.1"/>
    <property type="molecule type" value="Genomic_DNA"/>
</dbReference>
<dbReference type="RefSeq" id="WP_016359451.1">
    <property type="nucleotide sequence ID" value="NC_021229.1"/>
</dbReference>
<dbReference type="RefSeq" id="YP_007988766.1">
    <property type="nucleotide sequence ID" value="NC_021229.1"/>
</dbReference>
<dbReference type="PDB" id="7DQX">
    <property type="method" value="X-ray"/>
    <property type="resolution" value="3.44 A"/>
    <property type="chains" value="A/D=1-794"/>
</dbReference>
<dbReference type="PDBsum" id="7DQX"/>
<dbReference type="SMR" id="Q933N0"/>
<dbReference type="GeneID" id="84020285"/>
<dbReference type="KEGG" id="ag:CAC37487"/>
<dbReference type="BioCyc" id="MetaCyc:MONOMER-983"/>
<dbReference type="UniPathway" id="UPA00106"/>
<dbReference type="GO" id="GO:0034909">
    <property type="term" value="F:6-hydroxypseudooxynicotine dehydrogenase activity"/>
    <property type="evidence" value="ECO:0007669"/>
    <property type="project" value="UniProtKB-EC"/>
</dbReference>
<dbReference type="GO" id="GO:0005506">
    <property type="term" value="F:iron ion binding"/>
    <property type="evidence" value="ECO:0007669"/>
    <property type="project" value="InterPro"/>
</dbReference>
<dbReference type="GO" id="GO:0019608">
    <property type="term" value="P:nicotine catabolic process"/>
    <property type="evidence" value="ECO:0007669"/>
    <property type="project" value="UniProtKB-UniPathway"/>
</dbReference>
<dbReference type="Gene3D" id="3.90.1170.50">
    <property type="entry name" value="Aldehyde oxidase/xanthine dehydrogenase, a/b hammerhead"/>
    <property type="match status" value="1"/>
</dbReference>
<dbReference type="Gene3D" id="3.30.365.10">
    <property type="entry name" value="Aldehyde oxidase/xanthine dehydrogenase, molybdopterin binding domain"/>
    <property type="match status" value="4"/>
</dbReference>
<dbReference type="InterPro" id="IPR000674">
    <property type="entry name" value="Ald_Oxase/Xan_DH_a/b"/>
</dbReference>
<dbReference type="InterPro" id="IPR036856">
    <property type="entry name" value="Ald_Oxase/Xan_DH_a/b_sf"/>
</dbReference>
<dbReference type="InterPro" id="IPR016208">
    <property type="entry name" value="Ald_Oxase/xanthine_DH-like"/>
</dbReference>
<dbReference type="InterPro" id="IPR008274">
    <property type="entry name" value="AldOxase/xan_DH_MoCoBD1"/>
</dbReference>
<dbReference type="InterPro" id="IPR046867">
    <property type="entry name" value="AldOxase/xan_DH_MoCoBD2"/>
</dbReference>
<dbReference type="InterPro" id="IPR037165">
    <property type="entry name" value="AldOxase/xan_DH_Mopterin-bd_sf"/>
</dbReference>
<dbReference type="PANTHER" id="PTHR11908:SF132">
    <property type="entry name" value="ALDEHYDE OXIDASE 1-RELATED"/>
    <property type="match status" value="1"/>
</dbReference>
<dbReference type="PANTHER" id="PTHR11908">
    <property type="entry name" value="XANTHINE DEHYDROGENASE"/>
    <property type="match status" value="1"/>
</dbReference>
<dbReference type="Pfam" id="PF01315">
    <property type="entry name" value="Ald_Xan_dh_C"/>
    <property type="match status" value="1"/>
</dbReference>
<dbReference type="Pfam" id="PF02738">
    <property type="entry name" value="MoCoBD_1"/>
    <property type="match status" value="1"/>
</dbReference>
<dbReference type="Pfam" id="PF20256">
    <property type="entry name" value="MoCoBD_2"/>
    <property type="match status" value="1"/>
</dbReference>
<dbReference type="SMART" id="SM01008">
    <property type="entry name" value="Ald_Xan_dh_C"/>
    <property type="match status" value="1"/>
</dbReference>
<dbReference type="SUPFAM" id="SSF54665">
    <property type="entry name" value="CO dehydrogenase molybdoprotein N-domain-like"/>
    <property type="match status" value="1"/>
</dbReference>
<dbReference type="SUPFAM" id="SSF56003">
    <property type="entry name" value="Molybdenum cofactor-binding domain"/>
    <property type="match status" value="1"/>
</dbReference>
<gene>
    <name type="primary">kdhC</name>
    <name type="synonym">kdhL</name>
</gene>
<accession>Q933N0</accession>
<name>KDHC_PAENI</name>
<sequence length="794" mass="86371">MMAKAKALIPDNGRAGADEGNRQAWIGQEVLRREDRRLLTGTATFAGDLGVPGQLHMRIVRSTQAHARIVSIDATEAEKTPGVRMVITSEHTRHLGSVLLEELGYHEIYENIEDFSHPVLAVDKVLYVGQPVVAVLAVDPYLAEDAAELVSIEYEPLPVLLDPEEALTGKVELFPGRGNEGARIKKAYGDIDRAFAEAEHVIRHKYVTNRHSGVPMEPRAVVVQPDPARDTLFIWGTVHVHDNRRIIAKMLNLPEVNVRMKHVEIGGSFGVKGGVFPENVVAAWAARTLGVPIKWTEDRVEHMTSTSHAREMVHKLELALDAEGRILGMKDEIFHNHGAYFRQAEPLVSDITAGIVFGPYRVPAYDATLHAVFTNKTPVGAYRAPGRYESTFARERIFDLACAEIGLSKTEFRRRNLLTAEDLPWTPGLDIVHEPYHFDSGDVVKHFNEALEAANFSEWLEESKRLRADGRKVGVGLGVLMDKAGLGLFETGGVEVSRAGRVTVKTGGSSVGQGIETVLAQIVAEELQIAPENIDIVHSDTELIPDGVGSWSSRSTVLAGGAARKAALAVVEKARRLASEMLEADPDDLELTAGSFKVKGTDQQISLYEIAAARDPFTARADNDEPGLAADAVYMNNAMNYPYGVTLVQIELDPDTGGHRILRFSTSTEAGRVINPLTTRGQIIGAAVQGIGGALYEEFLYEEDGQPITTSFMDYLLPSAQEMPNVDCFVTEDAKSPDNPFGAKGLGEIGIIAAGAAIASAIDDAIADGVHTDRLPVTPEQIFSRCQGLNKAER</sequence>